<gene>
    <name evidence="1" type="primary">rplL</name>
    <name type="ordered locus">YPA_3620</name>
</gene>
<feature type="chain" id="PRO_1000007112" description="Large ribosomal subunit protein bL12">
    <location>
        <begin position="1"/>
        <end position="122"/>
    </location>
</feature>
<protein>
    <recommendedName>
        <fullName evidence="1">Large ribosomal subunit protein bL12</fullName>
    </recommendedName>
    <alternativeName>
        <fullName evidence="2">50S ribosomal protein L7/L12</fullName>
    </alternativeName>
</protein>
<name>RL7_YERPA</name>
<evidence type="ECO:0000255" key="1">
    <source>
        <dbReference type="HAMAP-Rule" id="MF_00368"/>
    </source>
</evidence>
<evidence type="ECO:0000305" key="2"/>
<dbReference type="EMBL" id="CP000308">
    <property type="protein sequence ID" value="ABG15582.1"/>
    <property type="molecule type" value="Genomic_DNA"/>
</dbReference>
<dbReference type="RefSeq" id="WP_002210675.1">
    <property type="nucleotide sequence ID" value="NZ_CP009906.1"/>
</dbReference>
<dbReference type="SMR" id="Q1C1U0"/>
<dbReference type="GeneID" id="96663775"/>
<dbReference type="KEGG" id="ypa:YPA_3620"/>
<dbReference type="Proteomes" id="UP000001971">
    <property type="component" value="Chromosome"/>
</dbReference>
<dbReference type="GO" id="GO:0022625">
    <property type="term" value="C:cytosolic large ribosomal subunit"/>
    <property type="evidence" value="ECO:0007669"/>
    <property type="project" value="TreeGrafter"/>
</dbReference>
<dbReference type="GO" id="GO:0003729">
    <property type="term" value="F:mRNA binding"/>
    <property type="evidence" value="ECO:0007669"/>
    <property type="project" value="TreeGrafter"/>
</dbReference>
<dbReference type="GO" id="GO:0003735">
    <property type="term" value="F:structural constituent of ribosome"/>
    <property type="evidence" value="ECO:0007669"/>
    <property type="project" value="InterPro"/>
</dbReference>
<dbReference type="GO" id="GO:0006412">
    <property type="term" value="P:translation"/>
    <property type="evidence" value="ECO:0007669"/>
    <property type="project" value="UniProtKB-UniRule"/>
</dbReference>
<dbReference type="CDD" id="cd00387">
    <property type="entry name" value="Ribosomal_L7_L12"/>
    <property type="match status" value="1"/>
</dbReference>
<dbReference type="FunFam" id="3.30.1390.10:FF:000001">
    <property type="entry name" value="50S ribosomal protein L7/L12"/>
    <property type="match status" value="1"/>
</dbReference>
<dbReference type="Gene3D" id="3.30.1390.10">
    <property type="match status" value="1"/>
</dbReference>
<dbReference type="Gene3D" id="1.20.5.710">
    <property type="entry name" value="Single helix bin"/>
    <property type="match status" value="1"/>
</dbReference>
<dbReference type="HAMAP" id="MF_00368">
    <property type="entry name" value="Ribosomal_bL12"/>
    <property type="match status" value="1"/>
</dbReference>
<dbReference type="InterPro" id="IPR000206">
    <property type="entry name" value="Ribosomal_bL12"/>
</dbReference>
<dbReference type="InterPro" id="IPR013823">
    <property type="entry name" value="Ribosomal_bL12_C"/>
</dbReference>
<dbReference type="InterPro" id="IPR014719">
    <property type="entry name" value="Ribosomal_bL12_C/ClpS-like"/>
</dbReference>
<dbReference type="InterPro" id="IPR008932">
    <property type="entry name" value="Ribosomal_bL12_oligo"/>
</dbReference>
<dbReference type="InterPro" id="IPR036235">
    <property type="entry name" value="Ribosomal_bL12_oligo_N_sf"/>
</dbReference>
<dbReference type="NCBIfam" id="TIGR00855">
    <property type="entry name" value="L12"/>
    <property type="match status" value="1"/>
</dbReference>
<dbReference type="PANTHER" id="PTHR45987">
    <property type="entry name" value="39S RIBOSOMAL PROTEIN L12"/>
    <property type="match status" value="1"/>
</dbReference>
<dbReference type="PANTHER" id="PTHR45987:SF4">
    <property type="entry name" value="LARGE RIBOSOMAL SUBUNIT PROTEIN BL12M"/>
    <property type="match status" value="1"/>
</dbReference>
<dbReference type="Pfam" id="PF00542">
    <property type="entry name" value="Ribosomal_L12"/>
    <property type="match status" value="1"/>
</dbReference>
<dbReference type="Pfam" id="PF16320">
    <property type="entry name" value="Ribosomal_L12_N"/>
    <property type="match status" value="1"/>
</dbReference>
<dbReference type="SUPFAM" id="SSF54736">
    <property type="entry name" value="ClpS-like"/>
    <property type="match status" value="1"/>
</dbReference>
<dbReference type="SUPFAM" id="SSF48300">
    <property type="entry name" value="Ribosomal protein L7/12, oligomerisation (N-terminal) domain"/>
    <property type="match status" value="1"/>
</dbReference>
<proteinExistence type="inferred from homology"/>
<reference key="1">
    <citation type="journal article" date="2006" name="J. Bacteriol.">
        <title>Complete genome sequence of Yersinia pestis strains Antiqua and Nepal516: evidence of gene reduction in an emerging pathogen.</title>
        <authorList>
            <person name="Chain P.S.G."/>
            <person name="Hu P."/>
            <person name="Malfatti S.A."/>
            <person name="Radnedge L."/>
            <person name="Larimer F."/>
            <person name="Vergez L.M."/>
            <person name="Worsham P."/>
            <person name="Chu M.C."/>
            <person name="Andersen G.L."/>
        </authorList>
    </citation>
    <scope>NUCLEOTIDE SEQUENCE [LARGE SCALE GENOMIC DNA]</scope>
    <source>
        <strain>Antiqua</strain>
    </source>
</reference>
<keyword id="KW-0687">Ribonucleoprotein</keyword>
<keyword id="KW-0689">Ribosomal protein</keyword>
<comment type="function">
    <text evidence="1">Forms part of the ribosomal stalk which helps the ribosome interact with GTP-bound translation factors. Is thus essential for accurate translation.</text>
</comment>
<comment type="subunit">
    <text evidence="1">Homodimer. Part of the ribosomal stalk of the 50S ribosomal subunit. Forms a multimeric L10(L12)X complex, where L10 forms an elongated spine to which 2 to 4 L12 dimers bind in a sequential fashion. Binds GTP-bound translation factors.</text>
</comment>
<comment type="similarity">
    <text evidence="1">Belongs to the bacterial ribosomal protein bL12 family.</text>
</comment>
<sequence length="122" mass="12530">MSTITKDQILEGVAALSVMEIVELISAMEEKFGVSAAAVAAGPAAAVEAAEEQTEFDVVLASFGENKVAVIKAVRGATGLGLKEAKDLVESAPAVLKEGVNKDEAETLKKSLEEAGASVEIK</sequence>
<organism>
    <name type="scientific">Yersinia pestis bv. Antiqua (strain Antiqua)</name>
    <dbReference type="NCBI Taxonomy" id="360102"/>
    <lineage>
        <taxon>Bacteria</taxon>
        <taxon>Pseudomonadati</taxon>
        <taxon>Pseudomonadota</taxon>
        <taxon>Gammaproteobacteria</taxon>
        <taxon>Enterobacterales</taxon>
        <taxon>Yersiniaceae</taxon>
        <taxon>Yersinia</taxon>
    </lineage>
</organism>
<accession>Q1C1U0</accession>